<proteinExistence type="inferred from homology"/>
<accession>B4ULD8</accession>
<keyword id="KW-0320">Glycogen biosynthesis</keyword>
<keyword id="KW-0328">Glycosyltransferase</keyword>
<keyword id="KW-0808">Transferase</keyword>
<name>GLGA_ANASK</name>
<sequence length="475" mass="51778">MQILFVASEVGPWSKTGGLGDVAGALPQALAERGNEVAVVTPRHGSIDPRAAGLQPVRTALQVRGEPVSLWVKRGPAPVYFVEHPHLFGNRRGLYGEGGRDHGDNAERFAFLTRAALALPGALGLRPRILHLNDWQCGLGPWLLRHEHARDPALAGARTVFTIHNLAYQGLFPKQVLPALGLPWEVFRWEAMEFFDQLSFMKAGLAFADALTTVSPTYAREILTPEGGASLDALLRHRARDLHGILNGIDVHAWDPARDPHLPAHFTAGDLAGKAACKAALQREVGLPVRPEVPVAGLVTRLAEQKGIDLVAAALPALLARDVQVVLLGSGDPAYQETFARAAREHPDRVAARIGFDEGLAHRIEAGADLFLMPSRFEPCGLNQMYSLRYGTVPVVRAVGGLADTVEDFDGVARGTGFRFSEYTPQALLTATRRALDVFRDRRAWRGLVERGMAEDNSWERSAARYEALYRTLAP</sequence>
<organism>
    <name type="scientific">Anaeromyxobacter sp. (strain K)</name>
    <dbReference type="NCBI Taxonomy" id="447217"/>
    <lineage>
        <taxon>Bacteria</taxon>
        <taxon>Pseudomonadati</taxon>
        <taxon>Myxococcota</taxon>
        <taxon>Myxococcia</taxon>
        <taxon>Myxococcales</taxon>
        <taxon>Cystobacterineae</taxon>
        <taxon>Anaeromyxobacteraceae</taxon>
        <taxon>Anaeromyxobacter</taxon>
    </lineage>
</organism>
<evidence type="ECO:0000255" key="1">
    <source>
        <dbReference type="HAMAP-Rule" id="MF_00484"/>
    </source>
</evidence>
<comment type="function">
    <text evidence="1">Synthesizes alpha-1,4-glucan chains using ADP-glucose.</text>
</comment>
<comment type="catalytic activity">
    <reaction evidence="1">
        <text>[(1-&gt;4)-alpha-D-glucosyl](n) + ADP-alpha-D-glucose = [(1-&gt;4)-alpha-D-glucosyl](n+1) + ADP + H(+)</text>
        <dbReference type="Rhea" id="RHEA:18189"/>
        <dbReference type="Rhea" id="RHEA-COMP:9584"/>
        <dbReference type="Rhea" id="RHEA-COMP:9587"/>
        <dbReference type="ChEBI" id="CHEBI:15378"/>
        <dbReference type="ChEBI" id="CHEBI:15444"/>
        <dbReference type="ChEBI" id="CHEBI:57498"/>
        <dbReference type="ChEBI" id="CHEBI:456216"/>
        <dbReference type="EC" id="2.4.1.21"/>
    </reaction>
</comment>
<comment type="pathway">
    <text evidence="1">Glycan biosynthesis; glycogen biosynthesis.</text>
</comment>
<comment type="similarity">
    <text evidence="1">Belongs to the glycosyltransferase 1 family. Bacterial/plant glycogen synthase subfamily.</text>
</comment>
<dbReference type="EC" id="2.4.1.21" evidence="1"/>
<dbReference type="EMBL" id="CP001131">
    <property type="protein sequence ID" value="ACG71385.1"/>
    <property type="molecule type" value="Genomic_DNA"/>
</dbReference>
<dbReference type="RefSeq" id="WP_012524221.1">
    <property type="nucleotide sequence ID" value="NC_011145.1"/>
</dbReference>
<dbReference type="SMR" id="B4ULD8"/>
<dbReference type="CAZy" id="GT5">
    <property type="family name" value="Glycosyltransferase Family 5"/>
</dbReference>
<dbReference type="KEGG" id="ank:AnaeK_0142"/>
<dbReference type="HOGENOM" id="CLU_009583_18_2_7"/>
<dbReference type="OrthoDB" id="9808590at2"/>
<dbReference type="UniPathway" id="UPA00164"/>
<dbReference type="Proteomes" id="UP000001871">
    <property type="component" value="Chromosome"/>
</dbReference>
<dbReference type="GO" id="GO:0005829">
    <property type="term" value="C:cytosol"/>
    <property type="evidence" value="ECO:0007669"/>
    <property type="project" value="TreeGrafter"/>
</dbReference>
<dbReference type="GO" id="GO:0009011">
    <property type="term" value="F:alpha-1,4-glucan glucosyltransferase (ADP-glucose donor) activity"/>
    <property type="evidence" value="ECO:0007669"/>
    <property type="project" value="UniProtKB-UniRule"/>
</dbReference>
<dbReference type="GO" id="GO:0004373">
    <property type="term" value="F:alpha-1,4-glucan glucosyltransferase (UDP-glucose donor) activity"/>
    <property type="evidence" value="ECO:0007669"/>
    <property type="project" value="InterPro"/>
</dbReference>
<dbReference type="GO" id="GO:0005978">
    <property type="term" value="P:glycogen biosynthetic process"/>
    <property type="evidence" value="ECO:0007669"/>
    <property type="project" value="UniProtKB-UniRule"/>
</dbReference>
<dbReference type="CDD" id="cd03791">
    <property type="entry name" value="GT5_Glycogen_synthase_DULL1-like"/>
    <property type="match status" value="1"/>
</dbReference>
<dbReference type="Gene3D" id="3.40.50.2000">
    <property type="entry name" value="Glycogen Phosphorylase B"/>
    <property type="match status" value="2"/>
</dbReference>
<dbReference type="HAMAP" id="MF_00484">
    <property type="entry name" value="Glycogen_synth"/>
    <property type="match status" value="1"/>
</dbReference>
<dbReference type="InterPro" id="IPR001296">
    <property type="entry name" value="Glyco_trans_1"/>
</dbReference>
<dbReference type="InterPro" id="IPR011835">
    <property type="entry name" value="GS/SS"/>
</dbReference>
<dbReference type="InterPro" id="IPR013534">
    <property type="entry name" value="Starch_synth_cat_dom"/>
</dbReference>
<dbReference type="NCBIfam" id="TIGR02095">
    <property type="entry name" value="glgA"/>
    <property type="match status" value="1"/>
</dbReference>
<dbReference type="NCBIfam" id="NF001899">
    <property type="entry name" value="PRK00654.1-2"/>
    <property type="match status" value="1"/>
</dbReference>
<dbReference type="PANTHER" id="PTHR45825:SF11">
    <property type="entry name" value="ALPHA AMYLASE DOMAIN-CONTAINING PROTEIN"/>
    <property type="match status" value="1"/>
</dbReference>
<dbReference type="PANTHER" id="PTHR45825">
    <property type="entry name" value="GRANULE-BOUND STARCH SYNTHASE 1, CHLOROPLASTIC/AMYLOPLASTIC"/>
    <property type="match status" value="1"/>
</dbReference>
<dbReference type="Pfam" id="PF08323">
    <property type="entry name" value="Glyco_transf_5"/>
    <property type="match status" value="1"/>
</dbReference>
<dbReference type="Pfam" id="PF00534">
    <property type="entry name" value="Glycos_transf_1"/>
    <property type="match status" value="1"/>
</dbReference>
<dbReference type="SUPFAM" id="SSF53756">
    <property type="entry name" value="UDP-Glycosyltransferase/glycogen phosphorylase"/>
    <property type="match status" value="1"/>
</dbReference>
<feature type="chain" id="PRO_1000126053" description="Glycogen synthase">
    <location>
        <begin position="1"/>
        <end position="475"/>
    </location>
</feature>
<feature type="binding site" evidence="1">
    <location>
        <position position="15"/>
    </location>
    <ligand>
        <name>ADP-alpha-D-glucose</name>
        <dbReference type="ChEBI" id="CHEBI:57498"/>
    </ligand>
</feature>
<reference key="1">
    <citation type="submission" date="2008-08" db="EMBL/GenBank/DDBJ databases">
        <title>Complete sequence of Anaeromyxobacter sp. K.</title>
        <authorList>
            <consortium name="US DOE Joint Genome Institute"/>
            <person name="Lucas S."/>
            <person name="Copeland A."/>
            <person name="Lapidus A."/>
            <person name="Glavina del Rio T."/>
            <person name="Dalin E."/>
            <person name="Tice H."/>
            <person name="Bruce D."/>
            <person name="Goodwin L."/>
            <person name="Pitluck S."/>
            <person name="Saunders E."/>
            <person name="Brettin T."/>
            <person name="Detter J.C."/>
            <person name="Han C."/>
            <person name="Larimer F."/>
            <person name="Land M."/>
            <person name="Hauser L."/>
            <person name="Kyrpides N."/>
            <person name="Ovchinnikiva G."/>
            <person name="Beliaev A."/>
        </authorList>
    </citation>
    <scope>NUCLEOTIDE SEQUENCE [LARGE SCALE GENOMIC DNA]</scope>
    <source>
        <strain>K</strain>
    </source>
</reference>
<protein>
    <recommendedName>
        <fullName evidence="1">Glycogen synthase</fullName>
        <ecNumber evidence="1">2.4.1.21</ecNumber>
    </recommendedName>
    <alternativeName>
        <fullName evidence="1">Starch [bacterial glycogen] synthase</fullName>
    </alternativeName>
</protein>
<gene>
    <name evidence="1" type="primary">glgA</name>
    <name type="ordered locus">AnaeK_0142</name>
</gene>